<gene>
    <name type="primary">ZHD2</name>
    <name type="ordered locus">Os08g0479400</name>
    <name type="ordered locus">LOC_Os08g37400</name>
    <name type="ORF">OJ1113_A10.19</name>
    <name type="ORF">OsJ_27685</name>
</gene>
<dbReference type="EMBL" id="AP004643">
    <property type="protein sequence ID" value="BAD09750.1"/>
    <property type="molecule type" value="Genomic_DNA"/>
</dbReference>
<dbReference type="EMBL" id="AP008214">
    <property type="protein sequence ID" value="BAF23969.1"/>
    <property type="molecule type" value="Genomic_DNA"/>
</dbReference>
<dbReference type="EMBL" id="AP014964">
    <property type="protein sequence ID" value="BAT05908.1"/>
    <property type="molecule type" value="Genomic_DNA"/>
</dbReference>
<dbReference type="EMBL" id="CM000145">
    <property type="protein sequence ID" value="EEE68874.1"/>
    <property type="status" value="ALT_FRAME"/>
    <property type="molecule type" value="Genomic_DNA"/>
</dbReference>
<dbReference type="EMBL" id="AK109528">
    <property type="protein sequence ID" value="BAG98791.1"/>
    <property type="molecule type" value="mRNA"/>
</dbReference>
<dbReference type="RefSeq" id="XP_015649557.1">
    <property type="nucleotide sequence ID" value="XM_015794071.1"/>
</dbReference>
<dbReference type="SMR" id="Q6ZB90"/>
<dbReference type="FunCoup" id="Q6ZB90">
    <property type="interactions" value="496"/>
</dbReference>
<dbReference type="STRING" id="39947.Q6ZB90"/>
<dbReference type="PaxDb" id="39947-Q6ZB90"/>
<dbReference type="EnsemblPlants" id="Os08t0479400-01">
    <property type="protein sequence ID" value="Os08t0479400-01"/>
    <property type="gene ID" value="Os08g0479400"/>
</dbReference>
<dbReference type="Gramene" id="Os08t0479400-01">
    <property type="protein sequence ID" value="Os08t0479400-01"/>
    <property type="gene ID" value="Os08g0479400"/>
</dbReference>
<dbReference type="KEGG" id="dosa:Os08g0479400"/>
<dbReference type="eggNOG" id="ENOG502QRG0">
    <property type="taxonomic scope" value="Eukaryota"/>
</dbReference>
<dbReference type="HOGENOM" id="CLU_039237_2_2_1"/>
<dbReference type="InParanoid" id="Q6ZB90"/>
<dbReference type="OMA" id="DSPMENS"/>
<dbReference type="OrthoDB" id="1921929at2759"/>
<dbReference type="Proteomes" id="UP000000763">
    <property type="component" value="Chromosome 8"/>
</dbReference>
<dbReference type="Proteomes" id="UP000007752">
    <property type="component" value="Chromosome 8"/>
</dbReference>
<dbReference type="Proteomes" id="UP000059680">
    <property type="component" value="Chromosome 8"/>
</dbReference>
<dbReference type="GO" id="GO:0005634">
    <property type="term" value="C:nucleus"/>
    <property type="evidence" value="ECO:0000318"/>
    <property type="project" value="GO_Central"/>
</dbReference>
<dbReference type="GO" id="GO:0003700">
    <property type="term" value="F:DNA-binding transcription factor activity"/>
    <property type="evidence" value="ECO:0000318"/>
    <property type="project" value="GO_Central"/>
</dbReference>
<dbReference type="GO" id="GO:0000976">
    <property type="term" value="F:transcription cis-regulatory region binding"/>
    <property type="evidence" value="ECO:0000318"/>
    <property type="project" value="GO_Central"/>
</dbReference>
<dbReference type="GO" id="GO:0008270">
    <property type="term" value="F:zinc ion binding"/>
    <property type="evidence" value="ECO:0007669"/>
    <property type="project" value="UniProtKB-KW"/>
</dbReference>
<dbReference type="GO" id="GO:0006355">
    <property type="term" value="P:regulation of DNA-templated transcription"/>
    <property type="evidence" value="ECO:0000318"/>
    <property type="project" value="GO_Central"/>
</dbReference>
<dbReference type="FunFam" id="1.10.10.60:FF:000257">
    <property type="entry name" value="Zinc-finger homeodomain protein 2"/>
    <property type="match status" value="1"/>
</dbReference>
<dbReference type="Gene3D" id="1.10.10.60">
    <property type="entry name" value="Homeodomain-like"/>
    <property type="match status" value="1"/>
</dbReference>
<dbReference type="InterPro" id="IPR009057">
    <property type="entry name" value="Homeodomain-like_sf"/>
</dbReference>
<dbReference type="InterPro" id="IPR006455">
    <property type="entry name" value="Homeodomain_ZF_HD"/>
</dbReference>
<dbReference type="InterPro" id="IPR006456">
    <property type="entry name" value="ZF_HD_homeobox_Cys/His_dimer"/>
</dbReference>
<dbReference type="NCBIfam" id="TIGR01565">
    <property type="entry name" value="homeo_ZF_HD"/>
    <property type="match status" value="1"/>
</dbReference>
<dbReference type="NCBIfam" id="TIGR01566">
    <property type="entry name" value="ZF_HD_prot_N"/>
    <property type="match status" value="1"/>
</dbReference>
<dbReference type="PANTHER" id="PTHR31948">
    <property type="entry name" value="ZINC-FINGER HOMEODOMAIN PROTEIN 2"/>
    <property type="match status" value="1"/>
</dbReference>
<dbReference type="PANTHER" id="PTHR31948:SF116">
    <property type="entry name" value="ZINC-FINGER HOMEODOMAIN PROTEIN 2"/>
    <property type="match status" value="1"/>
</dbReference>
<dbReference type="Pfam" id="PF04770">
    <property type="entry name" value="ZF-HD_dimer"/>
    <property type="match status" value="1"/>
</dbReference>
<dbReference type="SUPFAM" id="SSF46689">
    <property type="entry name" value="Homeodomain-like"/>
    <property type="match status" value="1"/>
</dbReference>
<dbReference type="PROSITE" id="PS51523">
    <property type="entry name" value="ZF_HD_DIMER"/>
    <property type="match status" value="1"/>
</dbReference>
<proteinExistence type="evidence at transcript level"/>
<comment type="function">
    <text evidence="1">Putative transcription factor.</text>
</comment>
<comment type="subunit">
    <text evidence="1">Homo- and heterodimer with other ZFHD proteins.</text>
</comment>
<comment type="subcellular location">
    <subcellularLocation>
        <location evidence="1">Nucleus</location>
    </subcellularLocation>
</comment>
<comment type="domain">
    <text>The homeodomain differs form the typical one by having namely 4 instead of 3 extra amino acids inserted in the loop between helix 1 and helix 2.</text>
</comment>
<comment type="sequence caution" evidence="4">
    <conflict type="frameshift">
        <sequence resource="EMBL-CDS" id="EEE68874"/>
    </conflict>
</comment>
<protein>
    <recommendedName>
        <fullName>Zinc-finger homeodomain protein 2</fullName>
        <shortName>OsZHD2</shortName>
    </recommendedName>
</protein>
<feature type="chain" id="PRO_0000426037" description="Zinc-finger homeodomain protein 2">
    <location>
        <begin position="1"/>
        <end position="290"/>
    </location>
</feature>
<feature type="zinc finger region" description="ZF-HD dimerization-type; degenerate" evidence="2">
    <location>
        <begin position="63"/>
        <end position="112"/>
    </location>
</feature>
<feature type="DNA-binding region" description="Homeobox">
    <location>
        <begin position="226"/>
        <end position="289"/>
    </location>
</feature>
<feature type="region of interest" description="Disordered" evidence="3">
    <location>
        <begin position="1"/>
        <end position="59"/>
    </location>
</feature>
<feature type="compositionally biased region" description="Acidic residues" evidence="3">
    <location>
        <begin position="1"/>
        <end position="15"/>
    </location>
</feature>
<feature type="compositionally biased region" description="Gly residues" evidence="3">
    <location>
        <begin position="31"/>
        <end position="59"/>
    </location>
</feature>
<feature type="site" description="Required for DNA-binding" evidence="1">
    <location>
        <position position="278"/>
    </location>
</feature>
<sequence>MDFDDHDEGDGDEEMPPMPLSSGYDAPMQPGLGGGGGGVPKPGGGVGGGGGGGGGGGGGGARYRECLKNHAVGIGGHAVDGCGEFMASGEEGSIDALRCAACGCHRNFHRKESESPTGVGPAEPSAVSPAAISAYGASPHHQFSPYYRTPAGYLHHQQHQMAAAAAAAAAAAAGGYPQRPLALPSTSHSGRDEGDDMSGMVGPMVIGPMVGMSLGSAGPSGSGSGKKRFRTKFTQEQKDKMLAFAERLGWRIQKHDEAAVQQFCEEVCVKRHVLKVWMHNNKHTLGKKAP</sequence>
<reference key="1">
    <citation type="journal article" date="2005" name="Nature">
        <title>The map-based sequence of the rice genome.</title>
        <authorList>
            <consortium name="International rice genome sequencing project (IRGSP)"/>
        </authorList>
    </citation>
    <scope>NUCLEOTIDE SEQUENCE [LARGE SCALE GENOMIC DNA]</scope>
    <source>
        <strain>cv. Nipponbare</strain>
    </source>
</reference>
<reference key="2">
    <citation type="journal article" date="2008" name="Nucleic Acids Res.">
        <title>The rice annotation project database (RAP-DB): 2008 update.</title>
        <authorList>
            <consortium name="The rice annotation project (RAP)"/>
        </authorList>
    </citation>
    <scope>GENOME REANNOTATION</scope>
    <source>
        <strain>cv. Nipponbare</strain>
    </source>
</reference>
<reference key="3">
    <citation type="journal article" date="2013" name="Rice">
        <title>Improvement of the Oryza sativa Nipponbare reference genome using next generation sequence and optical map data.</title>
        <authorList>
            <person name="Kawahara Y."/>
            <person name="de la Bastide M."/>
            <person name="Hamilton J.P."/>
            <person name="Kanamori H."/>
            <person name="McCombie W.R."/>
            <person name="Ouyang S."/>
            <person name="Schwartz D.C."/>
            <person name="Tanaka T."/>
            <person name="Wu J."/>
            <person name="Zhou S."/>
            <person name="Childs K.L."/>
            <person name="Davidson R.M."/>
            <person name="Lin H."/>
            <person name="Quesada-Ocampo L."/>
            <person name="Vaillancourt B."/>
            <person name="Sakai H."/>
            <person name="Lee S.S."/>
            <person name="Kim J."/>
            <person name="Numa H."/>
            <person name="Itoh T."/>
            <person name="Buell C.R."/>
            <person name="Matsumoto T."/>
        </authorList>
    </citation>
    <scope>GENOME REANNOTATION</scope>
    <source>
        <strain>cv. Nipponbare</strain>
    </source>
</reference>
<reference key="4">
    <citation type="journal article" date="2005" name="PLoS Biol.">
        <title>The genomes of Oryza sativa: a history of duplications.</title>
        <authorList>
            <person name="Yu J."/>
            <person name="Wang J."/>
            <person name="Lin W."/>
            <person name="Li S."/>
            <person name="Li H."/>
            <person name="Zhou J."/>
            <person name="Ni P."/>
            <person name="Dong W."/>
            <person name="Hu S."/>
            <person name="Zeng C."/>
            <person name="Zhang J."/>
            <person name="Zhang Y."/>
            <person name="Li R."/>
            <person name="Xu Z."/>
            <person name="Li S."/>
            <person name="Li X."/>
            <person name="Zheng H."/>
            <person name="Cong L."/>
            <person name="Lin L."/>
            <person name="Yin J."/>
            <person name="Geng J."/>
            <person name="Li G."/>
            <person name="Shi J."/>
            <person name="Liu J."/>
            <person name="Lv H."/>
            <person name="Li J."/>
            <person name="Wang J."/>
            <person name="Deng Y."/>
            <person name="Ran L."/>
            <person name="Shi X."/>
            <person name="Wang X."/>
            <person name="Wu Q."/>
            <person name="Li C."/>
            <person name="Ren X."/>
            <person name="Wang J."/>
            <person name="Wang X."/>
            <person name="Li D."/>
            <person name="Liu D."/>
            <person name="Zhang X."/>
            <person name="Ji Z."/>
            <person name="Zhao W."/>
            <person name="Sun Y."/>
            <person name="Zhang Z."/>
            <person name="Bao J."/>
            <person name="Han Y."/>
            <person name="Dong L."/>
            <person name="Ji J."/>
            <person name="Chen P."/>
            <person name="Wu S."/>
            <person name="Liu J."/>
            <person name="Xiao Y."/>
            <person name="Bu D."/>
            <person name="Tan J."/>
            <person name="Yang L."/>
            <person name="Ye C."/>
            <person name="Zhang J."/>
            <person name="Xu J."/>
            <person name="Zhou Y."/>
            <person name="Yu Y."/>
            <person name="Zhang B."/>
            <person name="Zhuang S."/>
            <person name="Wei H."/>
            <person name="Liu B."/>
            <person name="Lei M."/>
            <person name="Yu H."/>
            <person name="Li Y."/>
            <person name="Xu H."/>
            <person name="Wei S."/>
            <person name="He X."/>
            <person name="Fang L."/>
            <person name="Zhang Z."/>
            <person name="Zhang Y."/>
            <person name="Huang X."/>
            <person name="Su Z."/>
            <person name="Tong W."/>
            <person name="Li J."/>
            <person name="Tong Z."/>
            <person name="Li S."/>
            <person name="Ye J."/>
            <person name="Wang L."/>
            <person name="Fang L."/>
            <person name="Lei T."/>
            <person name="Chen C.-S."/>
            <person name="Chen H.-C."/>
            <person name="Xu Z."/>
            <person name="Li H."/>
            <person name="Huang H."/>
            <person name="Zhang F."/>
            <person name="Xu H."/>
            <person name="Li N."/>
            <person name="Zhao C."/>
            <person name="Li S."/>
            <person name="Dong L."/>
            <person name="Huang Y."/>
            <person name="Li L."/>
            <person name="Xi Y."/>
            <person name="Qi Q."/>
            <person name="Li W."/>
            <person name="Zhang B."/>
            <person name="Hu W."/>
            <person name="Zhang Y."/>
            <person name="Tian X."/>
            <person name="Jiao Y."/>
            <person name="Liang X."/>
            <person name="Jin J."/>
            <person name="Gao L."/>
            <person name="Zheng W."/>
            <person name="Hao B."/>
            <person name="Liu S.-M."/>
            <person name="Wang W."/>
            <person name="Yuan L."/>
            <person name="Cao M."/>
            <person name="McDermott J."/>
            <person name="Samudrala R."/>
            <person name="Wang J."/>
            <person name="Wong G.K.-S."/>
            <person name="Yang H."/>
        </authorList>
    </citation>
    <scope>NUCLEOTIDE SEQUENCE [LARGE SCALE GENOMIC DNA]</scope>
    <source>
        <strain>cv. Nipponbare</strain>
    </source>
</reference>
<reference key="5">
    <citation type="journal article" date="2003" name="Science">
        <title>Collection, mapping, and annotation of over 28,000 cDNA clones from japonica rice.</title>
        <authorList>
            <consortium name="The rice full-length cDNA consortium"/>
        </authorList>
    </citation>
    <scope>NUCLEOTIDE SEQUENCE [LARGE SCALE MRNA]</scope>
    <source>
        <strain>cv. Nipponbare</strain>
    </source>
</reference>
<reference key="6">
    <citation type="journal article" date="2008" name="J. Integr. Plant Biol.">
        <title>Phylogenetic analysis of the plant-specific zinc finger-homeobox and mini zinc finger gene families.</title>
        <authorList>
            <person name="Hu W."/>
            <person name="dePamphilis C.W."/>
            <person name="Ma H."/>
        </authorList>
    </citation>
    <scope>GENE FAMILY</scope>
    <scope>NOMENCLATURE</scope>
</reference>
<keyword id="KW-0238">DNA-binding</keyword>
<keyword id="KW-0371">Homeobox</keyword>
<keyword id="KW-0479">Metal-binding</keyword>
<keyword id="KW-0539">Nucleus</keyword>
<keyword id="KW-1185">Reference proteome</keyword>
<keyword id="KW-0804">Transcription</keyword>
<keyword id="KW-0805">Transcription regulation</keyword>
<keyword id="KW-0862">Zinc</keyword>
<keyword id="KW-0863">Zinc-finger</keyword>
<name>ZHD2_ORYSJ</name>
<accession>Q6ZB90</accession>
<accession>A0A0P0XH79</accession>
<accession>B9G1F7</accession>
<evidence type="ECO:0000250" key="1"/>
<evidence type="ECO:0000255" key="2">
    <source>
        <dbReference type="PROSITE-ProRule" id="PRU00856"/>
    </source>
</evidence>
<evidence type="ECO:0000256" key="3">
    <source>
        <dbReference type="SAM" id="MobiDB-lite"/>
    </source>
</evidence>
<evidence type="ECO:0000305" key="4"/>
<organism>
    <name type="scientific">Oryza sativa subsp. japonica</name>
    <name type="common">Rice</name>
    <dbReference type="NCBI Taxonomy" id="39947"/>
    <lineage>
        <taxon>Eukaryota</taxon>
        <taxon>Viridiplantae</taxon>
        <taxon>Streptophyta</taxon>
        <taxon>Embryophyta</taxon>
        <taxon>Tracheophyta</taxon>
        <taxon>Spermatophyta</taxon>
        <taxon>Magnoliopsida</taxon>
        <taxon>Liliopsida</taxon>
        <taxon>Poales</taxon>
        <taxon>Poaceae</taxon>
        <taxon>BOP clade</taxon>
        <taxon>Oryzoideae</taxon>
        <taxon>Oryzeae</taxon>
        <taxon>Oryzinae</taxon>
        <taxon>Oryza</taxon>
        <taxon>Oryza sativa</taxon>
    </lineage>
</organism>